<accession>Q9HRF9</accession>
<organism>
    <name type="scientific">Halobacterium salinarum (strain ATCC 700922 / JCM 11081 / NRC-1)</name>
    <name type="common">Halobacterium halobium</name>
    <dbReference type="NCBI Taxonomy" id="64091"/>
    <lineage>
        <taxon>Archaea</taxon>
        <taxon>Methanobacteriati</taxon>
        <taxon>Methanobacteriota</taxon>
        <taxon>Stenosarchaea group</taxon>
        <taxon>Halobacteria</taxon>
        <taxon>Halobacteriales</taxon>
        <taxon>Halobacteriaceae</taxon>
        <taxon>Halobacterium</taxon>
        <taxon>Halobacterium salinarum NRC-34001</taxon>
    </lineage>
</organism>
<keyword id="KW-0119">Carbohydrate metabolism</keyword>
<keyword id="KW-0378">Hydrolase</keyword>
<keyword id="KW-0460">Magnesium</keyword>
<keyword id="KW-0479">Metal-binding</keyword>
<keyword id="KW-1185">Reference proteome</keyword>
<feature type="chain" id="PRO_0000146716" description="Phosphoglycolate phosphatase">
    <location>
        <begin position="1"/>
        <end position="225"/>
    </location>
</feature>
<feature type="active site" description="Nucleophile" evidence="1">
    <location>
        <position position="11"/>
    </location>
</feature>
<feature type="binding site" evidence="1">
    <location>
        <position position="11"/>
    </location>
    <ligand>
        <name>Mg(2+)</name>
        <dbReference type="ChEBI" id="CHEBI:18420"/>
    </ligand>
</feature>
<feature type="binding site" evidence="1">
    <location>
        <position position="13"/>
    </location>
    <ligand>
        <name>Mg(2+)</name>
        <dbReference type="ChEBI" id="CHEBI:18420"/>
    </ligand>
</feature>
<feature type="binding site" evidence="1">
    <location>
        <position position="153"/>
    </location>
    <ligand>
        <name>substrate</name>
    </ligand>
</feature>
<feature type="binding site" evidence="1">
    <location>
        <position position="176"/>
    </location>
    <ligand>
        <name>Mg(2+)</name>
        <dbReference type="ChEBI" id="CHEBI:18420"/>
    </ligand>
</feature>
<feature type="binding site" evidence="1">
    <location>
        <position position="180"/>
    </location>
    <ligand>
        <name>Mg(2+)</name>
        <dbReference type="ChEBI" id="CHEBI:18420"/>
    </ligand>
</feature>
<name>PGP_HALSA</name>
<dbReference type="EC" id="3.1.3.18" evidence="1"/>
<dbReference type="EMBL" id="AE004437">
    <property type="protein sequence ID" value="AAG19199.1"/>
    <property type="molecule type" value="Genomic_DNA"/>
</dbReference>
<dbReference type="PIR" id="C84229">
    <property type="entry name" value="C84229"/>
</dbReference>
<dbReference type="RefSeq" id="WP_010902495.1">
    <property type="nucleotide sequence ID" value="NC_002607.1"/>
</dbReference>
<dbReference type="SMR" id="Q9HRF9"/>
<dbReference type="STRING" id="64091.VNG_0718C"/>
<dbReference type="PaxDb" id="64091-VNG_0718C"/>
<dbReference type="KEGG" id="hal:VNG_0718C"/>
<dbReference type="PATRIC" id="fig|64091.14.peg.547"/>
<dbReference type="HOGENOM" id="CLU_044146_2_0_2"/>
<dbReference type="InParanoid" id="Q9HRF9"/>
<dbReference type="OrthoDB" id="120822at2157"/>
<dbReference type="PhylomeDB" id="Q9HRF9"/>
<dbReference type="Proteomes" id="UP000000554">
    <property type="component" value="Chromosome"/>
</dbReference>
<dbReference type="GO" id="GO:0005829">
    <property type="term" value="C:cytosol"/>
    <property type="evidence" value="ECO:0000318"/>
    <property type="project" value="GO_Central"/>
</dbReference>
<dbReference type="GO" id="GO:0000287">
    <property type="term" value="F:magnesium ion binding"/>
    <property type="evidence" value="ECO:0000318"/>
    <property type="project" value="GO_Central"/>
</dbReference>
<dbReference type="GO" id="GO:0016791">
    <property type="term" value="F:phosphatase activity"/>
    <property type="evidence" value="ECO:0000318"/>
    <property type="project" value="GO_Central"/>
</dbReference>
<dbReference type="GO" id="GO:0008967">
    <property type="term" value="F:phosphoglycolate phosphatase activity"/>
    <property type="evidence" value="ECO:0007669"/>
    <property type="project" value="UniProtKB-UniRule"/>
</dbReference>
<dbReference type="CDD" id="cd07514">
    <property type="entry name" value="HAD_Pase"/>
    <property type="match status" value="1"/>
</dbReference>
<dbReference type="Gene3D" id="3.90.1070.10">
    <property type="match status" value="1"/>
</dbReference>
<dbReference type="Gene3D" id="3.40.50.1000">
    <property type="entry name" value="HAD superfamily/HAD-like"/>
    <property type="match status" value="1"/>
</dbReference>
<dbReference type="HAMAP" id="MF_01419">
    <property type="entry name" value="GPH_hydrolase_arch"/>
    <property type="match status" value="1"/>
</dbReference>
<dbReference type="InterPro" id="IPR036412">
    <property type="entry name" value="HAD-like_sf"/>
</dbReference>
<dbReference type="InterPro" id="IPR006379">
    <property type="entry name" value="HAD-SF_hydro_IIB"/>
</dbReference>
<dbReference type="InterPro" id="IPR023214">
    <property type="entry name" value="HAD_sf"/>
</dbReference>
<dbReference type="InterPro" id="IPR006382">
    <property type="entry name" value="PGPase"/>
</dbReference>
<dbReference type="NCBIfam" id="TIGR01484">
    <property type="entry name" value="HAD-SF-IIB"/>
    <property type="match status" value="1"/>
</dbReference>
<dbReference type="NCBIfam" id="TIGR01487">
    <property type="entry name" value="Pglycolate_arch"/>
    <property type="match status" value="1"/>
</dbReference>
<dbReference type="PANTHER" id="PTHR10000:SF8">
    <property type="entry name" value="HAD SUPERFAMILY HYDROLASE-LIKE, TYPE 3"/>
    <property type="match status" value="1"/>
</dbReference>
<dbReference type="PANTHER" id="PTHR10000">
    <property type="entry name" value="PHOSPHOSERINE PHOSPHATASE"/>
    <property type="match status" value="1"/>
</dbReference>
<dbReference type="Pfam" id="PF08282">
    <property type="entry name" value="Hydrolase_3"/>
    <property type="match status" value="2"/>
</dbReference>
<dbReference type="SUPFAM" id="SSF56784">
    <property type="entry name" value="HAD-like"/>
    <property type="match status" value="1"/>
</dbReference>
<protein>
    <recommendedName>
        <fullName evidence="1">Phosphoglycolate phosphatase</fullName>
        <shortName evidence="1">PGP</shortName>
        <shortName evidence="1">PGPase</shortName>
        <ecNumber evidence="1">3.1.3.18</ecNumber>
    </recommendedName>
</protein>
<sequence>MDTADPPLAVDIDGTLSRADRSIDGRVLDVLRGWDGPVVVATGKALPYAVALCQFAGIDERVIAENGGVAYVGDELLHFGDSRAVEQVAAAFEDAGHDIGWGDADLTNRWRETELAVSREQPLDVLSALAADHGLHVVDTGFAYHVKPESMSKGNALPAVAARLGVTAGDFVAVGDSANDVELFEAVGESYAVGNADDHAKGAAETVLSETHGDGFLAAVDRIRS</sequence>
<proteinExistence type="inferred from homology"/>
<reference key="1">
    <citation type="journal article" date="2000" name="Proc. Natl. Acad. Sci. U.S.A.">
        <title>Genome sequence of Halobacterium species NRC-1.</title>
        <authorList>
            <person name="Ng W.V."/>
            <person name="Kennedy S.P."/>
            <person name="Mahairas G.G."/>
            <person name="Berquist B."/>
            <person name="Pan M."/>
            <person name="Shukla H.D."/>
            <person name="Lasky S.R."/>
            <person name="Baliga N.S."/>
            <person name="Thorsson V."/>
            <person name="Sbrogna J."/>
            <person name="Swartzell S."/>
            <person name="Weir D."/>
            <person name="Hall J."/>
            <person name="Dahl T.A."/>
            <person name="Welti R."/>
            <person name="Goo Y.A."/>
            <person name="Leithauser B."/>
            <person name="Keller K."/>
            <person name="Cruz R."/>
            <person name="Danson M.J."/>
            <person name="Hough D.W."/>
            <person name="Maddocks D.G."/>
            <person name="Jablonski P.E."/>
            <person name="Krebs M.P."/>
            <person name="Angevine C.M."/>
            <person name="Dale H."/>
            <person name="Isenbarger T.A."/>
            <person name="Peck R.F."/>
            <person name="Pohlschroder M."/>
            <person name="Spudich J.L."/>
            <person name="Jung K.-H."/>
            <person name="Alam M."/>
            <person name="Freitas T."/>
            <person name="Hou S."/>
            <person name="Daniels C.J."/>
            <person name="Dennis P.P."/>
            <person name="Omer A.D."/>
            <person name="Ebhardt H."/>
            <person name="Lowe T.M."/>
            <person name="Liang P."/>
            <person name="Riley M."/>
            <person name="Hood L."/>
            <person name="DasSarma S."/>
        </authorList>
    </citation>
    <scope>NUCLEOTIDE SEQUENCE [LARGE SCALE GENOMIC DNA]</scope>
    <source>
        <strain>ATCC 700922 / JCM 11081 / NRC-1</strain>
    </source>
</reference>
<evidence type="ECO:0000255" key="1">
    <source>
        <dbReference type="HAMAP-Rule" id="MF_01419"/>
    </source>
</evidence>
<comment type="function">
    <text evidence="1">Catalyzes the dephosphorylation of 2-phosphoglycolate.</text>
</comment>
<comment type="catalytic activity">
    <reaction evidence="1">
        <text>2-phosphoglycolate + H2O = glycolate + phosphate</text>
        <dbReference type="Rhea" id="RHEA:14369"/>
        <dbReference type="ChEBI" id="CHEBI:15377"/>
        <dbReference type="ChEBI" id="CHEBI:29805"/>
        <dbReference type="ChEBI" id="CHEBI:43474"/>
        <dbReference type="ChEBI" id="CHEBI:58033"/>
        <dbReference type="EC" id="3.1.3.18"/>
    </reaction>
</comment>
<comment type="cofactor">
    <cofactor evidence="1">
        <name>Mg(2+)</name>
        <dbReference type="ChEBI" id="CHEBI:18420"/>
    </cofactor>
</comment>
<comment type="similarity">
    <text evidence="1">Belongs to the archaeal SPP-like hydrolase family.</text>
</comment>
<gene>
    <name type="ordered locus">VNG_0718C</name>
</gene>